<gene>
    <name type="primary">tgfb1i1</name>
    <name type="synonym">ara55</name>
</gene>
<reference key="1">
    <citation type="journal article" date="2006" name="J. Biol. Chem.">
        <title>HIC-5 is a novel repressor of lymphoid enhancer factor/T-cell factor-driven transcription.</title>
        <authorList>
            <person name="Ghogomu S.M."/>
            <person name="van Venrooy S."/>
            <person name="Ritthaler M."/>
            <person name="Wedlich D."/>
            <person name="Gradl D."/>
        </authorList>
    </citation>
    <scope>NUCLEOTIDE SEQUENCE [MRNA]</scope>
    <scope>FUNCTION</scope>
    <scope>INTERACTION WITH TCF3 AND TCF7L2</scope>
    <source>
        <tissue>Tail bud</tissue>
    </source>
</reference>
<reference key="2">
    <citation type="submission" date="2006-10" db="EMBL/GenBank/DDBJ databases">
        <authorList>
            <consortium name="NIH - Xenopus Gene Collection (XGC) project"/>
        </authorList>
    </citation>
    <scope>NUCLEOTIDE SEQUENCE [LARGE SCALE MRNA]</scope>
    <source>
        <tissue>Fat body</tissue>
    </source>
</reference>
<feature type="chain" id="PRO_0000291585" description="Transforming growth factor beta-1-induced transcript 1 protein">
    <location>
        <begin position="1"/>
        <end position="506"/>
    </location>
</feature>
<feature type="domain" description="LIM zinc-binding 1" evidence="2">
    <location>
        <begin position="271"/>
        <end position="330"/>
    </location>
</feature>
<feature type="domain" description="LIM zinc-binding 2" evidence="2">
    <location>
        <begin position="331"/>
        <end position="388"/>
    </location>
</feature>
<feature type="domain" description="LIM zinc-binding 3" evidence="2">
    <location>
        <begin position="389"/>
        <end position="448"/>
    </location>
</feature>
<feature type="domain" description="LIM zinc-binding 4" evidence="2">
    <location>
        <begin position="449"/>
        <end position="506"/>
    </location>
</feature>
<feature type="region of interest" description="Disordered" evidence="3">
    <location>
        <begin position="15"/>
        <end position="62"/>
    </location>
</feature>
<feature type="region of interest" description="Disordered" evidence="3">
    <location>
        <begin position="154"/>
        <end position="201"/>
    </location>
</feature>
<feature type="region of interest" description="Disordered" evidence="3">
    <location>
        <begin position="221"/>
        <end position="244"/>
    </location>
</feature>
<feature type="short sequence motif" description="LD motif 1">
    <location>
        <begin position="3"/>
        <end position="15"/>
    </location>
</feature>
<feature type="short sequence motif" description="LD motif 2">
    <location>
        <begin position="87"/>
        <end position="99"/>
    </location>
</feature>
<feature type="short sequence motif" description="LD motif 3">
    <location>
        <begin position="139"/>
        <end position="150"/>
    </location>
</feature>
<feature type="short sequence motif" description="LD motif 4">
    <location>
        <begin position="248"/>
        <end position="260"/>
    </location>
</feature>
<feature type="compositionally biased region" description="Basic and acidic residues" evidence="3">
    <location>
        <begin position="52"/>
        <end position="62"/>
    </location>
</feature>
<feature type="compositionally biased region" description="Basic and acidic residues" evidence="3">
    <location>
        <begin position="168"/>
        <end position="177"/>
    </location>
</feature>
<feature type="sequence conflict" description="In Ref. 1; AAY40865." evidence="5" ref="1">
    <original>K</original>
    <variation>T</variation>
    <location>
        <position position="51"/>
    </location>
</feature>
<feature type="sequence conflict" description="In Ref. 1; AAY40865." evidence="5" ref="1">
    <original>D</original>
    <variation>H</variation>
    <location>
        <position position="54"/>
    </location>
</feature>
<feature type="sequence conflict" description="In Ref. 1; AAY40865." evidence="5" ref="1">
    <original>S</original>
    <variation>N</variation>
    <location>
        <position position="116"/>
    </location>
</feature>
<feature type="sequence conflict" description="In Ref. 1; AAY40865." evidence="5" ref="1">
    <original>S</original>
    <variation>A</variation>
    <location>
        <position position="132"/>
    </location>
</feature>
<feature type="sequence conflict" description="In Ref. 1; AAY40865." evidence="5" ref="1">
    <original>VEAPGAY</original>
    <variation>GEVPDSN</variation>
    <location>
        <begin position="160"/>
        <end position="166"/>
    </location>
</feature>
<feature type="sequence conflict" description="In Ref. 1; AAY40865." evidence="5" ref="1">
    <original>SRPG</original>
    <variation>FKPR</variation>
    <location>
        <begin position="173"/>
        <end position="176"/>
    </location>
</feature>
<feature type="sequence conflict" description="In Ref. 1; AAY40865." evidence="5" ref="1">
    <original>L</original>
    <variation>P</variation>
    <location>
        <position position="181"/>
    </location>
</feature>
<feature type="sequence conflict" description="In Ref. 1; AAY40865." evidence="5" ref="1">
    <original>STAC</original>
    <variation>DTLD</variation>
    <location>
        <begin position="186"/>
        <end position="189"/>
    </location>
</feature>
<feature type="sequence conflict" description="In Ref. 1; AAY40865." evidence="5" ref="1">
    <original>D</original>
    <variation>A</variation>
    <location>
        <position position="193"/>
    </location>
</feature>
<feature type="sequence conflict" description="In Ref. 1; AAY40865." evidence="5" ref="1">
    <original>APT</original>
    <variation>IPS</variation>
    <location>
        <begin position="197"/>
        <end position="199"/>
    </location>
</feature>
<feature type="sequence conflict" description="In Ref. 1; AAY40865." evidence="5" ref="1">
    <original>FKVVSA</original>
    <variation>SEVMST</variation>
    <location>
        <begin position="203"/>
        <end position="208"/>
    </location>
</feature>
<feature type="sequence conflict" description="In Ref. 1; AAY40865." evidence="5" ref="1">
    <original>L</original>
    <variation>M</variation>
    <location>
        <position position="212"/>
    </location>
</feature>
<feature type="sequence conflict" description="In Ref. 1; AAY40865." evidence="5" ref="1">
    <original>TN</original>
    <variation>ID</variation>
    <location>
        <begin position="216"/>
        <end position="217"/>
    </location>
</feature>
<feature type="sequence conflict" description="In Ref. 1; AAY40865." evidence="5" ref="1">
    <original>E</original>
    <variation>K</variation>
    <location>
        <position position="223"/>
    </location>
</feature>
<feature type="sequence conflict" description="In Ref. 1; AAY40865." evidence="5" ref="1">
    <original>V</original>
    <variation>L</variation>
    <location>
        <position position="229"/>
    </location>
</feature>
<feature type="sequence conflict" description="In Ref. 1; AAY40865." evidence="5" ref="1">
    <original>Y</original>
    <variation>H</variation>
    <location>
        <position position="268"/>
    </location>
</feature>
<feature type="sequence conflict" description="In Ref. 1; AAY40865." evidence="5" ref="1">
    <original>T</original>
    <variation>A</variation>
    <location>
        <position position="304"/>
    </location>
</feature>
<feature type="sequence conflict" description="In Ref. 2; AAI25984." evidence="5" ref="2">
    <original>S</original>
    <variation>T</variation>
    <location>
        <position position="309"/>
    </location>
</feature>
<feature type="sequence conflict" description="In Ref. 1; AAY40865." evidence="5" ref="1">
    <original>E</original>
    <variation>D</variation>
    <location>
        <position position="336"/>
    </location>
</feature>
<feature type="sequence conflict" description="In Ref. 1; AAY40865." evidence="5" ref="1">
    <original>C</original>
    <variation>R</variation>
    <location>
        <position position="349"/>
    </location>
</feature>
<feature type="sequence conflict" description="In Ref. 1; AAY40865." evidence="5" ref="1">
    <original>V</original>
    <variation>I</variation>
    <location>
        <position position="360"/>
    </location>
</feature>
<feature type="sequence conflict" description="In Ref. 1; AAY40865." evidence="5" ref="1">
    <original>T</original>
    <variation>A</variation>
    <location>
        <position position="463"/>
    </location>
</feature>
<feature type="sequence conflict" description="In Ref. 1; AAY40865." evidence="5" ref="1">
    <original>N</original>
    <variation>S</variation>
    <location>
        <position position="475"/>
    </location>
</feature>
<feature type="sequence conflict" description="In Ref. 1; AAY40865." evidence="5" ref="1">
    <original>E</original>
    <variation>G</variation>
    <location>
        <position position="493"/>
    </location>
</feature>
<organism>
    <name type="scientific">Xenopus laevis</name>
    <name type="common">African clawed frog</name>
    <dbReference type="NCBI Taxonomy" id="8355"/>
    <lineage>
        <taxon>Eukaryota</taxon>
        <taxon>Metazoa</taxon>
        <taxon>Chordata</taxon>
        <taxon>Craniata</taxon>
        <taxon>Vertebrata</taxon>
        <taxon>Euteleostomi</taxon>
        <taxon>Amphibia</taxon>
        <taxon>Batrachia</taxon>
        <taxon>Anura</taxon>
        <taxon>Pipoidea</taxon>
        <taxon>Pipidae</taxon>
        <taxon>Xenopodinae</taxon>
        <taxon>Xenopus</taxon>
        <taxon>Xenopus</taxon>
    </lineage>
</organism>
<evidence type="ECO:0000250" key="1"/>
<evidence type="ECO:0000255" key="2">
    <source>
        <dbReference type="PROSITE-ProRule" id="PRU00125"/>
    </source>
</evidence>
<evidence type="ECO:0000256" key="3">
    <source>
        <dbReference type="SAM" id="MobiDB-lite"/>
    </source>
</evidence>
<evidence type="ECO:0000269" key="4">
    <source>
    </source>
</evidence>
<evidence type="ECO:0000305" key="5"/>
<comment type="function">
    <text evidence="4">Functions as a molecular adapter coordinating multiple protein-protein interactions at the focal adhesion complex and in the nucleus. May regulate both Wnt and steroid signaling pathways and play a role in the processes of cell growth, proliferation, migration, differentiation and senescence. May have a zinc-dependent DNA-binding activity.</text>
</comment>
<comment type="subunit">
    <text evidence="4">Interacts with tcf3 and tcf7l2.</text>
</comment>
<comment type="subcellular location">
    <subcellularLocation>
        <location evidence="1">Cell junction</location>
        <location evidence="1">Focal adhesion</location>
    </subcellularLocation>
    <subcellularLocation>
        <location evidence="1">Nucleus matrix</location>
    </subcellularLocation>
    <subcellularLocation>
        <location evidence="1">Cytoplasm</location>
        <location evidence="1">Cytoskeleton</location>
    </subcellularLocation>
    <text evidence="1">Associated with the actin cytoskeleton; colocalizes with stress fibers.</text>
</comment>
<comment type="domain">
    <text evidence="1">The LIM zinc-binding domains mediate glucocorticoid receptor coactivation and mediates interaction with tcf3 and tcf7l2. The LIM zinc-binding 2 and LIM zinc-binding 3 domains mediate targeting to focal adhesions and actin stress fibers. The LIM zinc-binding 4 domain mediates targeting to the nuclear matrix (By similarity).</text>
</comment>
<comment type="domain">
    <text evidence="1">The LD (leucine and aspartate-rich) motif 3 functions as a nuclear export signal.</text>
</comment>
<comment type="similarity">
    <text evidence="5">Belongs to the paxillin family.</text>
</comment>
<comment type="sequence caution" evidence="5">
    <conflict type="erroneous initiation">
        <sequence resource="EMBL-CDS" id="AAI25984"/>
    </conflict>
</comment>
<name>TGFI1_XENLA</name>
<protein>
    <recommendedName>
        <fullName>Transforming growth factor beta-1-induced transcript 1 protein</fullName>
    </recommendedName>
    <alternativeName>
        <fullName>Androgen receptor activator of 55 kDa</fullName>
    </alternativeName>
    <alternativeName>
        <fullName>Hydrogen peroxide-inducible clone 5 protein</fullName>
        <shortName>Hic-5</shortName>
    </alternativeName>
</protein>
<proteinExistence type="evidence at protein level"/>
<keyword id="KW-0010">Activator</keyword>
<keyword id="KW-0965">Cell junction</keyword>
<keyword id="KW-0963">Cytoplasm</keyword>
<keyword id="KW-0206">Cytoskeleton</keyword>
<keyword id="KW-0221">Differentiation</keyword>
<keyword id="KW-0440">LIM domain</keyword>
<keyword id="KW-0479">Metal-binding</keyword>
<keyword id="KW-0539">Nucleus</keyword>
<keyword id="KW-1185">Reference proteome</keyword>
<keyword id="KW-0677">Repeat</keyword>
<keyword id="KW-0879">Wnt signaling pathway</keyword>
<keyword id="KW-0862">Zinc</keyword>
<sequence>MEDLDALLADLQITTPPRCPVLLTDSPEKPQPTETRPPPPPYDPKTAMSNKTSDHETFPVDKDHLYSTVQKYPLPSVSPALGGGLCELDRLLNELNATQFNITDEIMSQFPTRDPSEQKAEAQKEAEKRALSASSATLELDRLMASLSDFHKQNTVSQEVEAPGAYKGSEEVSRPGDTEDLSSPRSTACVPKDLEDAPTPKSFKVVSAPGHLEVKTNQVNSDEVTASRVPDSVSGSKVPEATSVPRSDLDSMLVKLQSGLKQQGIETYSKGLCESCQRPIAGQVVTALGHTWHPEHFVCAHCHTLIGTSNFFEKDGRPYCEKDYFMLYAPRCALCELPIVQNMVTALGCTWHPEHFCCKVCKKPIGEEGFHEKDGEQYCSDDYFRLFGAVCAGCTEAVKESYISALGGLWHPQCFVCHVCHTPFINGSFFEHEGLPLCETHYHSRRGSLCAGCEQPITGRCVTAMGKKFHPQHLNCTFCLRQLNKGTFREHDEKPYCQACYARLYG</sequence>
<dbReference type="EMBL" id="AY971603">
    <property type="protein sequence ID" value="AAY40865.1"/>
    <property type="molecule type" value="mRNA"/>
</dbReference>
<dbReference type="EMBL" id="BC125983">
    <property type="protein sequence ID" value="AAI25984.1"/>
    <property type="status" value="ALT_INIT"/>
    <property type="molecule type" value="mRNA"/>
</dbReference>
<dbReference type="RefSeq" id="NP_001090425.2">
    <property type="nucleotide sequence ID" value="NM_001096956.1"/>
</dbReference>
<dbReference type="SMR" id="Q2TCH4"/>
<dbReference type="BioGRID" id="608044">
    <property type="interactions" value="1"/>
</dbReference>
<dbReference type="IntAct" id="Q2TCH4">
    <property type="interactions" value="1"/>
</dbReference>
<dbReference type="DNASU" id="779337"/>
<dbReference type="GeneID" id="779337"/>
<dbReference type="KEGG" id="xla:779337"/>
<dbReference type="CTD" id="779337"/>
<dbReference type="OrthoDB" id="15567at2759"/>
<dbReference type="Proteomes" id="UP000186698">
    <property type="component" value="Chromosome 9_10L"/>
</dbReference>
<dbReference type="Bgee" id="779337">
    <property type="expression patterns" value="Expressed in lung and 15 other cell types or tissues"/>
</dbReference>
<dbReference type="GO" id="GO:0005737">
    <property type="term" value="C:cytoplasm"/>
    <property type="evidence" value="ECO:0007669"/>
    <property type="project" value="UniProtKB-KW"/>
</dbReference>
<dbReference type="GO" id="GO:0005856">
    <property type="term" value="C:cytoskeleton"/>
    <property type="evidence" value="ECO:0007669"/>
    <property type="project" value="UniProtKB-SubCell"/>
</dbReference>
<dbReference type="GO" id="GO:0005925">
    <property type="term" value="C:focal adhesion"/>
    <property type="evidence" value="ECO:0007669"/>
    <property type="project" value="UniProtKB-SubCell"/>
</dbReference>
<dbReference type="GO" id="GO:0016363">
    <property type="term" value="C:nuclear matrix"/>
    <property type="evidence" value="ECO:0007669"/>
    <property type="project" value="UniProtKB-SubCell"/>
</dbReference>
<dbReference type="GO" id="GO:0046872">
    <property type="term" value="F:metal ion binding"/>
    <property type="evidence" value="ECO:0007669"/>
    <property type="project" value="UniProtKB-KW"/>
</dbReference>
<dbReference type="GO" id="GO:0003713">
    <property type="term" value="F:transcription coactivator activity"/>
    <property type="evidence" value="ECO:0000250"/>
    <property type="project" value="UniProtKB"/>
</dbReference>
<dbReference type="GO" id="GO:0030154">
    <property type="term" value="P:cell differentiation"/>
    <property type="evidence" value="ECO:0007669"/>
    <property type="project" value="UniProtKB-KW"/>
</dbReference>
<dbReference type="GO" id="GO:0016055">
    <property type="term" value="P:Wnt signaling pathway"/>
    <property type="evidence" value="ECO:0007669"/>
    <property type="project" value="UniProtKB-KW"/>
</dbReference>
<dbReference type="CDD" id="cd09336">
    <property type="entry name" value="LIM1_Paxillin_like"/>
    <property type="match status" value="1"/>
</dbReference>
<dbReference type="CDD" id="cd09338">
    <property type="entry name" value="LIM3_Paxillin_like"/>
    <property type="match status" value="1"/>
</dbReference>
<dbReference type="CDD" id="cd09339">
    <property type="entry name" value="LIM4_Paxillin_like"/>
    <property type="match status" value="1"/>
</dbReference>
<dbReference type="FunFam" id="2.10.110.10:FF:000008">
    <property type="entry name" value="Paxillin isoform 1"/>
    <property type="match status" value="1"/>
</dbReference>
<dbReference type="FunFam" id="2.10.110.10:FF:000009">
    <property type="entry name" value="Paxillin isoform 1"/>
    <property type="match status" value="1"/>
</dbReference>
<dbReference type="FunFam" id="2.10.110.10:FF:000018">
    <property type="entry name" value="Paxillin isoform 1"/>
    <property type="match status" value="1"/>
</dbReference>
<dbReference type="FunFam" id="2.10.110.10:FF:000201">
    <property type="entry name" value="Transforming growth factor beta 1-induced transcript 1"/>
    <property type="match status" value="1"/>
</dbReference>
<dbReference type="Gene3D" id="2.10.110.10">
    <property type="entry name" value="Cysteine Rich Protein"/>
    <property type="match status" value="4"/>
</dbReference>
<dbReference type="InterPro" id="IPR047075">
    <property type="entry name" value="Paxillin_TGFB1I1_LIM_dom1"/>
</dbReference>
<dbReference type="InterPro" id="IPR017305">
    <property type="entry name" value="Tgfb1i1/Leupaxin/TGFB1I1"/>
</dbReference>
<dbReference type="InterPro" id="IPR001781">
    <property type="entry name" value="Znf_LIM"/>
</dbReference>
<dbReference type="PANTHER" id="PTHR24216">
    <property type="entry name" value="PAXILLIN-RELATED"/>
    <property type="match status" value="1"/>
</dbReference>
<dbReference type="PANTHER" id="PTHR24216:SF27">
    <property type="entry name" value="TRANSFORMING GROWTH FACTOR BETA-1-INDUCED TRANSCRIPT 1 PROTEIN"/>
    <property type="match status" value="1"/>
</dbReference>
<dbReference type="Pfam" id="PF00412">
    <property type="entry name" value="LIM"/>
    <property type="match status" value="4"/>
</dbReference>
<dbReference type="PIRSF" id="PIRSF037881">
    <property type="entry name" value="Leupaxin"/>
    <property type="match status" value="1"/>
</dbReference>
<dbReference type="SMART" id="SM00132">
    <property type="entry name" value="LIM"/>
    <property type="match status" value="4"/>
</dbReference>
<dbReference type="SUPFAM" id="SSF57716">
    <property type="entry name" value="Glucocorticoid receptor-like (DNA-binding domain)"/>
    <property type="match status" value="5"/>
</dbReference>
<dbReference type="PROSITE" id="PS00478">
    <property type="entry name" value="LIM_DOMAIN_1"/>
    <property type="match status" value="4"/>
</dbReference>
<dbReference type="PROSITE" id="PS50023">
    <property type="entry name" value="LIM_DOMAIN_2"/>
    <property type="match status" value="4"/>
</dbReference>
<accession>Q2TCH4</accession>
<accession>A0JMS0</accession>